<name>MT1_TRIRP</name>
<keyword id="KW-0479">Metal-binding</keyword>
<keyword id="KW-0480">Metal-thiolate cluster</keyword>
<comment type="function">
    <text>Metallothioneins have a high content of cysteine residues that bind various heavy metals.</text>
</comment>
<comment type="similarity">
    <text evidence="1">Belongs to the metallothionein superfamily. Type 15 family.</text>
</comment>
<proteinExistence type="inferred from homology"/>
<organism>
    <name type="scientific">Trifolium repens</name>
    <name type="common">Creeping white clover</name>
    <dbReference type="NCBI Taxonomy" id="3899"/>
    <lineage>
        <taxon>Eukaryota</taxon>
        <taxon>Viridiplantae</taxon>
        <taxon>Streptophyta</taxon>
        <taxon>Embryophyta</taxon>
        <taxon>Tracheophyta</taxon>
        <taxon>Spermatophyta</taxon>
        <taxon>Magnoliopsida</taxon>
        <taxon>eudicotyledons</taxon>
        <taxon>Gunneridae</taxon>
        <taxon>Pentapetalae</taxon>
        <taxon>rosids</taxon>
        <taxon>fabids</taxon>
        <taxon>Fabales</taxon>
        <taxon>Fabaceae</taxon>
        <taxon>Papilionoideae</taxon>
        <taxon>50 kb inversion clade</taxon>
        <taxon>NPAAA clade</taxon>
        <taxon>Hologalegina</taxon>
        <taxon>IRL clade</taxon>
        <taxon>Trifolieae</taxon>
        <taxon>Trifolium</taxon>
    </lineage>
</organism>
<dbReference type="EMBL" id="Z26493">
    <property type="protein sequence ID" value="CAA81265.1"/>
    <property type="molecule type" value="mRNA"/>
</dbReference>
<dbReference type="PIR" id="S37240">
    <property type="entry name" value="S37240"/>
</dbReference>
<dbReference type="OrthoDB" id="1111048at2759"/>
<dbReference type="GO" id="GO:0046872">
    <property type="term" value="F:metal ion binding"/>
    <property type="evidence" value="ECO:0007669"/>
    <property type="project" value="UniProtKB-KW"/>
</dbReference>
<dbReference type="InterPro" id="IPR000347">
    <property type="entry name" value="Metalthion_15p"/>
</dbReference>
<dbReference type="PANTHER" id="PTHR33543:SF10">
    <property type="entry name" value="METALLOTHIONEIN-LIKE PROTEIN"/>
    <property type="match status" value="1"/>
</dbReference>
<dbReference type="PANTHER" id="PTHR33543">
    <property type="entry name" value="METALLOTHIONEIN-LIKE PROTEIN 2A"/>
    <property type="match status" value="1"/>
</dbReference>
<dbReference type="Pfam" id="PF01439">
    <property type="entry name" value="Metallothio_2"/>
    <property type="match status" value="1"/>
</dbReference>
<accession>P43399</accession>
<protein>
    <recommendedName>
        <fullName>Metallothionein-like protein 1</fullName>
    </recommendedName>
    <alternativeName>
        <fullName>Metallothionein-like protein B</fullName>
        <shortName>MT-B</shortName>
    </alternativeName>
</protein>
<sequence length="75" mass="7660">MSGCNCGSSCNCGDSCKCNKRSSGLNYVEAETTETVILGVGPAKIQFEDAEMGVAAEDSGCKCGSSCTCDPCNCK</sequence>
<feature type="chain" id="PRO_0000197381" description="Metallothionein-like protein 1">
    <location>
        <begin position="1"/>
        <end position="75"/>
    </location>
</feature>
<gene>
    <name type="primary">MT1B</name>
</gene>
<evidence type="ECO:0000305" key="1"/>
<reference key="1">
    <citation type="online journal article" date="1996" name="Plant Gene Register">
        <title>Isolation of two cDNA clones encoding metallothionein-like proteins from Trifolium repens L.</title>
        <authorList>
            <person name="Ellison N.W."/>
            <person name="White D.W.R."/>
        </authorList>
        <locator>PGR96-068</locator>
    </citation>
    <scope>NUCLEOTIDE SEQUENCE [MRNA]</scope>
    <source>
        <strain>cv. Huia</strain>
        <tissue>Stolon node</tissue>
    </source>
</reference>